<name>IPT6_ARATH</name>
<sequence>MQQLMTLLSPPLSHSSLLPTVTTKFGSPRLVTTCMGHAGRKNIKDKVVLITGTTGTGKSRLSVDLATRFFPAEIINSDKMQIYKGFEIVTNLIPLHEQGGVPHHLLGQFHPQDGELTPAEFRSLATLSISKLISSKKLPIVVGGSNSFNHALLAERFDPDIDPFSPGSSLSTICSDLRYKCCILWVDVLEPVLFQHLCNRVDQMIESGLVEQLAELYDPVVDSGRRLGVRKTIGVEEFDRYFRVYPKEMDKGIWDLARKAAYEETVKGMKERTCRLVKKQKEKIMKLIRGGWEIKRLDATAAIMAELNQSTAKGEGKNGREIWEKHIVDESVEIVKKFLLEV</sequence>
<evidence type="ECO:0000255" key="1"/>
<evidence type="ECO:0000269" key="2">
    <source>
    </source>
</evidence>
<evidence type="ECO:0000269" key="3">
    <source>
    </source>
</evidence>
<evidence type="ECO:0000305" key="4"/>
<proteinExistence type="evidence at transcript level"/>
<gene>
    <name type="primary">IPT6</name>
    <name type="ordered locus">At1g25410</name>
    <name type="ORF">F2J7.12</name>
</gene>
<accession>Q9C6L1</accession>
<keyword id="KW-0067">ATP-binding</keyword>
<keyword id="KW-0150">Chloroplast</keyword>
<keyword id="KW-0203">Cytokinin biosynthesis</keyword>
<keyword id="KW-0547">Nucleotide-binding</keyword>
<keyword id="KW-0934">Plastid</keyword>
<keyword id="KW-1185">Reference proteome</keyword>
<keyword id="KW-0808">Transferase</keyword>
<keyword id="KW-0809">Transit peptide</keyword>
<protein>
    <recommendedName>
        <fullName>Adenylate isopentenyltransferase 6, chloroplastic</fullName>
        <shortName>AtIPT6</shortName>
        <ecNumber>2.5.1.112</ecNumber>
    </recommendedName>
    <alternativeName>
        <fullName>Adenylate dimethylallyltransferase 6</fullName>
    </alternativeName>
    <alternativeName>
        <fullName>Cytokinin synthase 6</fullName>
    </alternativeName>
</protein>
<organism>
    <name type="scientific">Arabidopsis thaliana</name>
    <name type="common">Mouse-ear cress</name>
    <dbReference type="NCBI Taxonomy" id="3702"/>
    <lineage>
        <taxon>Eukaryota</taxon>
        <taxon>Viridiplantae</taxon>
        <taxon>Streptophyta</taxon>
        <taxon>Embryophyta</taxon>
        <taxon>Tracheophyta</taxon>
        <taxon>Spermatophyta</taxon>
        <taxon>Magnoliopsida</taxon>
        <taxon>eudicotyledons</taxon>
        <taxon>Gunneridae</taxon>
        <taxon>Pentapetalae</taxon>
        <taxon>rosids</taxon>
        <taxon>malvids</taxon>
        <taxon>Brassicales</taxon>
        <taxon>Brassicaceae</taxon>
        <taxon>Camelineae</taxon>
        <taxon>Arabidopsis</taxon>
    </lineage>
</organism>
<comment type="function">
    <text evidence="2">Involved in cytokinin biosynthesis. Catalyzes the transfer of an isopentenyl group from dimethylallyl diphosphate (DMAPP) to ATP and ADP.</text>
</comment>
<comment type="catalytic activity">
    <reaction>
        <text>dimethylallyl diphosphate + ADP = N(6)-(dimethylallyl)adenosine 5'-diphosphate + diphosphate</text>
        <dbReference type="Rhea" id="RHEA:36327"/>
        <dbReference type="ChEBI" id="CHEBI:33019"/>
        <dbReference type="ChEBI" id="CHEBI:57623"/>
        <dbReference type="ChEBI" id="CHEBI:73533"/>
        <dbReference type="ChEBI" id="CHEBI:456216"/>
        <dbReference type="EC" id="2.5.1.112"/>
    </reaction>
</comment>
<comment type="catalytic activity">
    <reaction>
        <text>dimethylallyl diphosphate + ATP = N(6)-(dimethylallyl)adenosine 5'-triphosphate + diphosphate</text>
        <dbReference type="Rhea" id="RHEA:36331"/>
        <dbReference type="ChEBI" id="CHEBI:30616"/>
        <dbReference type="ChEBI" id="CHEBI:33019"/>
        <dbReference type="ChEBI" id="CHEBI:57623"/>
        <dbReference type="ChEBI" id="CHEBI:73532"/>
        <dbReference type="EC" id="2.5.1.112"/>
    </reaction>
</comment>
<comment type="subcellular location">
    <subcellularLocation>
        <location evidence="4">Plastid</location>
        <location evidence="4">Chloroplast</location>
    </subcellularLocation>
</comment>
<comment type="tissue specificity">
    <text evidence="3">Expressed in siliques, at the mRNA level.</text>
</comment>
<comment type="miscellaneous">
    <text>Due to a nucleotide deletion that would cause a frameshift, IPT6 seems to be a pseudogene in cv. Wassilewskija.</text>
</comment>
<comment type="similarity">
    <text evidence="4">Belongs to the IPP transferase family.</text>
</comment>
<reference key="1">
    <citation type="journal article" date="2001" name="J. Biol. Chem.">
        <title>Identification of genes encoding adenylate isopentenyltransferase, a cytokinin biosynthesis enzyme, in Arabidopsis thaliana.</title>
        <authorList>
            <person name="Takei K."/>
            <person name="Sakakibara H."/>
            <person name="Sugiyama T."/>
        </authorList>
    </citation>
    <scope>NUCLEOTIDE SEQUENCE [MRNA]</scope>
    <scope>FUNCTION</scope>
    <scope>GENE FAMILY</scope>
    <source>
        <strain>cv. Columbia</strain>
    </source>
</reference>
<reference key="2">
    <citation type="journal article" date="2001" name="Plant Cell Physiol.">
        <title>Identification of plant cytokinin biosynthetic enzymes as dimethylallyl diphosphate:ATP/ADP isopentenyltransferases.</title>
        <authorList>
            <person name="Kakimoto T."/>
        </authorList>
    </citation>
    <scope>NUCLEOTIDE SEQUENCE [MRNA]</scope>
    <scope>GENE FAMILY</scope>
    <source>
        <strain>cv. Wassilewskija</strain>
    </source>
</reference>
<reference key="3">
    <citation type="journal article" date="2000" name="Nature">
        <title>Sequence and analysis of chromosome 1 of the plant Arabidopsis thaliana.</title>
        <authorList>
            <person name="Theologis A."/>
            <person name="Ecker J.R."/>
            <person name="Palm C.J."/>
            <person name="Federspiel N.A."/>
            <person name="Kaul S."/>
            <person name="White O."/>
            <person name="Alonso J."/>
            <person name="Altafi H."/>
            <person name="Araujo R."/>
            <person name="Bowman C.L."/>
            <person name="Brooks S.Y."/>
            <person name="Buehler E."/>
            <person name="Chan A."/>
            <person name="Chao Q."/>
            <person name="Chen H."/>
            <person name="Cheuk R.F."/>
            <person name="Chin C.W."/>
            <person name="Chung M.K."/>
            <person name="Conn L."/>
            <person name="Conway A.B."/>
            <person name="Conway A.R."/>
            <person name="Creasy T.H."/>
            <person name="Dewar K."/>
            <person name="Dunn P."/>
            <person name="Etgu P."/>
            <person name="Feldblyum T.V."/>
            <person name="Feng J.-D."/>
            <person name="Fong B."/>
            <person name="Fujii C.Y."/>
            <person name="Gill J.E."/>
            <person name="Goldsmith A.D."/>
            <person name="Haas B."/>
            <person name="Hansen N.F."/>
            <person name="Hughes B."/>
            <person name="Huizar L."/>
            <person name="Hunter J.L."/>
            <person name="Jenkins J."/>
            <person name="Johnson-Hopson C."/>
            <person name="Khan S."/>
            <person name="Khaykin E."/>
            <person name="Kim C.J."/>
            <person name="Koo H.L."/>
            <person name="Kremenetskaia I."/>
            <person name="Kurtz D.B."/>
            <person name="Kwan A."/>
            <person name="Lam B."/>
            <person name="Langin-Hooper S."/>
            <person name="Lee A."/>
            <person name="Lee J.M."/>
            <person name="Lenz C.A."/>
            <person name="Li J.H."/>
            <person name="Li Y.-P."/>
            <person name="Lin X."/>
            <person name="Liu S.X."/>
            <person name="Liu Z.A."/>
            <person name="Luros J.S."/>
            <person name="Maiti R."/>
            <person name="Marziali A."/>
            <person name="Militscher J."/>
            <person name="Miranda M."/>
            <person name="Nguyen M."/>
            <person name="Nierman W.C."/>
            <person name="Osborne B.I."/>
            <person name="Pai G."/>
            <person name="Peterson J."/>
            <person name="Pham P.K."/>
            <person name="Rizzo M."/>
            <person name="Rooney T."/>
            <person name="Rowley D."/>
            <person name="Sakano H."/>
            <person name="Salzberg S.L."/>
            <person name="Schwartz J.R."/>
            <person name="Shinn P."/>
            <person name="Southwick A.M."/>
            <person name="Sun H."/>
            <person name="Tallon L.J."/>
            <person name="Tambunga G."/>
            <person name="Toriumi M.J."/>
            <person name="Town C.D."/>
            <person name="Utterback T."/>
            <person name="Van Aken S."/>
            <person name="Vaysberg M."/>
            <person name="Vysotskaia V.S."/>
            <person name="Walker M."/>
            <person name="Wu D."/>
            <person name="Yu G."/>
            <person name="Fraser C.M."/>
            <person name="Venter J.C."/>
            <person name="Davis R.W."/>
        </authorList>
    </citation>
    <scope>NUCLEOTIDE SEQUENCE [LARGE SCALE GENOMIC DNA]</scope>
    <source>
        <strain>cv. Columbia</strain>
    </source>
</reference>
<reference key="4">
    <citation type="journal article" date="2017" name="Plant J.">
        <title>Araport11: a complete reannotation of the Arabidopsis thaliana reference genome.</title>
        <authorList>
            <person name="Cheng C.Y."/>
            <person name="Krishnakumar V."/>
            <person name="Chan A.P."/>
            <person name="Thibaud-Nissen F."/>
            <person name="Schobel S."/>
            <person name="Town C.D."/>
        </authorList>
    </citation>
    <scope>GENOME REANNOTATION</scope>
    <source>
        <strain>cv. Columbia</strain>
    </source>
</reference>
<reference key="5">
    <citation type="journal article" date="2004" name="Plant J.">
        <title>Expression of cytokinin biosynthetic isopentenyltransferase genes in Arabidopsis: tissue specificity and regulation by auxin, cytokinin, and nitrate.</title>
        <authorList>
            <person name="Miyawaki K."/>
            <person name="Matsumoto-Kitano M."/>
            <person name="Kakimoto T."/>
        </authorList>
    </citation>
    <scope>TISSUE SPECIFICITY</scope>
</reference>
<feature type="transit peptide" description="Chloroplast" evidence="1">
    <location>
        <begin position="1"/>
        <end position="33"/>
    </location>
</feature>
<feature type="chain" id="PRO_0000391074" description="Adenylate isopentenyltransferase 6, chloroplastic">
    <location>
        <begin position="34"/>
        <end position="342"/>
    </location>
</feature>
<feature type="binding site" evidence="1">
    <location>
        <begin position="52"/>
        <end position="59"/>
    </location>
    <ligand>
        <name>ATP</name>
        <dbReference type="ChEBI" id="CHEBI:30616"/>
    </ligand>
</feature>
<dbReference type="EC" id="2.5.1.112"/>
<dbReference type="EMBL" id="AB062612">
    <property type="protein sequence ID" value="BAB59045.1"/>
    <property type="molecule type" value="mRNA"/>
</dbReference>
<dbReference type="EMBL" id="AC079281">
    <property type="protein sequence ID" value="AAG50809.1"/>
    <property type="molecule type" value="Genomic_DNA"/>
</dbReference>
<dbReference type="EMBL" id="CP002684">
    <property type="protein sequence ID" value="AEE30619.1"/>
    <property type="molecule type" value="Genomic_DNA"/>
</dbReference>
<dbReference type="PIR" id="B86384">
    <property type="entry name" value="B86384"/>
</dbReference>
<dbReference type="RefSeq" id="NP_173912.1">
    <property type="nucleotide sequence ID" value="NM_102352.1"/>
</dbReference>
<dbReference type="SMR" id="Q9C6L1"/>
<dbReference type="STRING" id="3702.Q9C6L1"/>
<dbReference type="iPTMnet" id="Q9C6L1"/>
<dbReference type="PaxDb" id="3702-AT1G25410.1"/>
<dbReference type="ProteomicsDB" id="247040"/>
<dbReference type="EnsemblPlants" id="AT1G25410.1">
    <property type="protein sequence ID" value="AT1G25410.1"/>
    <property type="gene ID" value="AT1G25410"/>
</dbReference>
<dbReference type="GeneID" id="839127"/>
<dbReference type="Gramene" id="AT1G25410.1">
    <property type="protein sequence ID" value="AT1G25410.1"/>
    <property type="gene ID" value="AT1G25410"/>
</dbReference>
<dbReference type="KEGG" id="ath:AT1G25410"/>
<dbReference type="Araport" id="AT1G25410"/>
<dbReference type="TAIR" id="AT1G25410">
    <property type="gene designation" value="IPT6"/>
</dbReference>
<dbReference type="eggNOG" id="KOG1384">
    <property type="taxonomic scope" value="Eukaryota"/>
</dbReference>
<dbReference type="HOGENOM" id="CLU_032616_4_1_1"/>
<dbReference type="InParanoid" id="Q9C6L1"/>
<dbReference type="OMA" id="WVDIAFP"/>
<dbReference type="PhylomeDB" id="Q9C6L1"/>
<dbReference type="BRENDA" id="2.5.1.112">
    <property type="organism ID" value="399"/>
</dbReference>
<dbReference type="PRO" id="PR:Q9C6L1"/>
<dbReference type="Proteomes" id="UP000006548">
    <property type="component" value="Chromosome 1"/>
</dbReference>
<dbReference type="ExpressionAtlas" id="Q9C6L1">
    <property type="expression patterns" value="baseline and differential"/>
</dbReference>
<dbReference type="GO" id="GO:0009507">
    <property type="term" value="C:chloroplast"/>
    <property type="evidence" value="ECO:0007669"/>
    <property type="project" value="UniProtKB-SubCell"/>
</dbReference>
<dbReference type="GO" id="GO:0005524">
    <property type="term" value="F:ATP binding"/>
    <property type="evidence" value="ECO:0007669"/>
    <property type="project" value="UniProtKB-KW"/>
</dbReference>
<dbReference type="GO" id="GO:0052622">
    <property type="term" value="F:ATP/ADP dimethylallyltransferase activity"/>
    <property type="evidence" value="ECO:0000250"/>
    <property type="project" value="TAIR"/>
</dbReference>
<dbReference type="GO" id="GO:0009691">
    <property type="term" value="P:cytokinin biosynthetic process"/>
    <property type="evidence" value="ECO:0007669"/>
    <property type="project" value="UniProtKB-KW"/>
</dbReference>
<dbReference type="Gene3D" id="1.10.287.890">
    <property type="entry name" value="Crystal structure of tRNA isopentenylpyrophosphate transferase (bh2366) domain"/>
    <property type="match status" value="1"/>
</dbReference>
<dbReference type="Gene3D" id="3.40.50.300">
    <property type="entry name" value="P-loop containing nucleotide triphosphate hydrolases"/>
    <property type="match status" value="1"/>
</dbReference>
<dbReference type="InterPro" id="IPR039657">
    <property type="entry name" value="Dimethylallyltransferase"/>
</dbReference>
<dbReference type="InterPro" id="IPR027417">
    <property type="entry name" value="P-loop_NTPase"/>
</dbReference>
<dbReference type="PANTHER" id="PTHR11088:SF86">
    <property type="entry name" value="ADENYLATE ISOPENTENYLTRANSFERASE 4-RELATED"/>
    <property type="match status" value="1"/>
</dbReference>
<dbReference type="PANTHER" id="PTHR11088">
    <property type="entry name" value="TRNA DIMETHYLALLYLTRANSFERASE"/>
    <property type="match status" value="1"/>
</dbReference>
<dbReference type="Pfam" id="PF01715">
    <property type="entry name" value="IPPT"/>
    <property type="match status" value="2"/>
</dbReference>
<dbReference type="SUPFAM" id="SSF52540">
    <property type="entry name" value="P-loop containing nucleoside triphosphate hydrolases"/>
    <property type="match status" value="1"/>
</dbReference>